<sequence length="376" mass="43403">MWLILFMIVIGAVIGGVTNSLAIKMLFRPYSEKRIGRFRLPFTPGLIPKRHDELATQLGRMVVSYLVTSVGIGKKLTEASFTDSVTEWAKRESRKFLSSDQSLSSILHQNFQVEDSEKLVLQQVERWLETSYDRWFREANSRTIGMALPEVIVEKVERNLPAIRRMLLTKARDYVASDQGKAQLSVMIDRFLETHGTLGNMVSMFFSNERLVDKLHPELLKFLNDQETEKWLQKLLDNEWERLKEKPLADIQQYVEKEAVVRIGRQVLQTQVPVIQWLGKPLHAWTGPYEEKVAEEWVPKLVHVTIQLLVSQLDHMLERLHLEEIVREQVSAFSVERLEELVLSISRKEFKMITYLGALLGGGIGLVQSLIILLIK</sequence>
<comment type="subcellular location">
    <subcellularLocation>
        <location evidence="1">Cell membrane</location>
        <topology evidence="1">Multi-pass membrane protein</topology>
    </subcellularLocation>
</comment>
<comment type="similarity">
    <text evidence="3">Belongs to the UPF0754 family.</text>
</comment>
<comment type="sequence caution" evidence="3">
    <conflict type="erroneous initiation">
        <sequence resource="EMBL-CDS" id="BAB04867"/>
    </conflict>
</comment>
<feature type="chain" id="PRO_0000388279" description="UPF0754 membrane protein BH1148">
    <location>
        <begin position="1"/>
        <end position="376"/>
    </location>
</feature>
<feature type="transmembrane region" description="Helical" evidence="2">
    <location>
        <begin position="3"/>
        <end position="23"/>
    </location>
</feature>
<feature type="transmembrane region" description="Helical" evidence="2">
    <location>
        <begin position="355"/>
        <end position="375"/>
    </location>
</feature>
<keyword id="KW-1003">Cell membrane</keyword>
<keyword id="KW-0472">Membrane</keyword>
<keyword id="KW-1185">Reference proteome</keyword>
<keyword id="KW-0812">Transmembrane</keyword>
<keyword id="KW-1133">Transmembrane helix</keyword>
<organism>
    <name type="scientific">Halalkalibacterium halodurans (strain ATCC BAA-125 / DSM 18197 / FERM 7344 / JCM 9153 / C-125)</name>
    <name type="common">Bacillus halodurans</name>
    <dbReference type="NCBI Taxonomy" id="272558"/>
    <lineage>
        <taxon>Bacteria</taxon>
        <taxon>Bacillati</taxon>
        <taxon>Bacillota</taxon>
        <taxon>Bacilli</taxon>
        <taxon>Bacillales</taxon>
        <taxon>Bacillaceae</taxon>
        <taxon>Halalkalibacterium (ex Joshi et al. 2022)</taxon>
    </lineage>
</organism>
<protein>
    <recommendedName>
        <fullName>UPF0754 membrane protein BH1148</fullName>
    </recommendedName>
</protein>
<proteinExistence type="inferred from homology"/>
<evidence type="ECO:0000250" key="1"/>
<evidence type="ECO:0000255" key="2"/>
<evidence type="ECO:0000305" key="3"/>
<name>Y1148_HALH5</name>
<reference key="1">
    <citation type="journal article" date="2000" name="Nucleic Acids Res.">
        <title>Complete genome sequence of the alkaliphilic bacterium Bacillus halodurans and genomic sequence comparison with Bacillus subtilis.</title>
        <authorList>
            <person name="Takami H."/>
            <person name="Nakasone K."/>
            <person name="Takaki Y."/>
            <person name="Maeno G."/>
            <person name="Sasaki R."/>
            <person name="Masui N."/>
            <person name="Fuji F."/>
            <person name="Hirama C."/>
            <person name="Nakamura Y."/>
            <person name="Ogasawara N."/>
            <person name="Kuhara S."/>
            <person name="Horikoshi K."/>
        </authorList>
    </citation>
    <scope>NUCLEOTIDE SEQUENCE [LARGE SCALE GENOMIC DNA]</scope>
    <source>
        <strain>ATCC BAA-125 / DSM 18197 / FERM 7344 / JCM 9153 / C-125</strain>
    </source>
</reference>
<accession>Q9KDR3</accession>
<gene>
    <name type="ordered locus">BH1148</name>
</gene>
<dbReference type="EMBL" id="BA000004">
    <property type="protein sequence ID" value="BAB04867.1"/>
    <property type="status" value="ALT_INIT"/>
    <property type="molecule type" value="Genomic_DNA"/>
</dbReference>
<dbReference type="PIR" id="D83793">
    <property type="entry name" value="D83793"/>
</dbReference>
<dbReference type="RefSeq" id="WP_233422101.1">
    <property type="nucleotide sequence ID" value="NC_002570.2"/>
</dbReference>
<dbReference type="STRING" id="272558.gene:10727042"/>
<dbReference type="KEGG" id="bha:BH1148"/>
<dbReference type="eggNOG" id="COG4399">
    <property type="taxonomic scope" value="Bacteria"/>
</dbReference>
<dbReference type="HOGENOM" id="CLU_042384_0_0_9"/>
<dbReference type="Proteomes" id="UP000001258">
    <property type="component" value="Chromosome"/>
</dbReference>
<dbReference type="GO" id="GO:0005886">
    <property type="term" value="C:plasma membrane"/>
    <property type="evidence" value="ECO:0007669"/>
    <property type="project" value="UniProtKB-SubCell"/>
</dbReference>
<dbReference type="InterPro" id="IPR007383">
    <property type="entry name" value="DUF445"/>
</dbReference>
<dbReference type="InterPro" id="IPR016991">
    <property type="entry name" value="UCP032178"/>
</dbReference>
<dbReference type="PANTHER" id="PTHR35791">
    <property type="entry name" value="UPF0754 MEMBRANE PROTEIN YHEB"/>
    <property type="match status" value="1"/>
</dbReference>
<dbReference type="PANTHER" id="PTHR35791:SF1">
    <property type="entry name" value="UPF0754 MEMBRANE PROTEIN YHEB"/>
    <property type="match status" value="1"/>
</dbReference>
<dbReference type="Pfam" id="PF04286">
    <property type="entry name" value="DUF445"/>
    <property type="match status" value="1"/>
</dbReference>
<dbReference type="PIRSF" id="PIRSF032178">
    <property type="entry name" value="UCP032178"/>
    <property type="match status" value="1"/>
</dbReference>